<protein>
    <recommendedName>
        <fullName>Probable folate-biopterin transporter 9, chloroplastic</fullName>
    </recommendedName>
</protein>
<evidence type="ECO:0000250" key="1"/>
<evidence type="ECO:0000255" key="2"/>
<evidence type="ECO:0000305" key="3"/>
<comment type="function">
    <text evidence="1">Could mediate folate transport.</text>
</comment>
<comment type="subcellular location">
    <subcellularLocation>
        <location evidence="3">Plastid</location>
        <location evidence="3">Chloroplast membrane</location>
        <topology evidence="3">Multi-pass membrane protein</topology>
    </subcellularLocation>
</comment>
<comment type="similarity">
    <text evidence="3">Belongs to the major facilitator superfamily. Folate-biopterin transporter (TC 2.A.71) family.</text>
</comment>
<comment type="sequence caution" evidence="3">
    <conflict type="erroneous initiation">
        <sequence resource="EMBL-CDS" id="AAB80646"/>
    </conflict>
    <text>Truncated N-terminus.</text>
</comment>
<sequence>MNNPLLSISNPVKFFKPPIPYRISLNTTINKKQKHQSKTLVVKSNKRSTTSLTSSVSLVRRRNNNGDGETTLVKKVGRDEKGQTVLLCALGYWVQGLRCFSWLALNFHMAHCLNLKPSTLQLVQYTASLPMVAKPLYGVLSDVLYIGGARRVPYISVGVLLQGLAWGSLAIFPGAREVLPSLMAFILLSNLGASITEVSQDALVAEYGLRYQINGLQSYALMASAVGGILGNLLGGYCLLKTPPRILFLAFTALLSLQLIVSLSSKEESVNLPRIGEVTPEISSVLGIVKKQFLDLKGIVQVDEISQPLIWIVSSIALVPLLSGSVFCYQTQVLNLDPSVIGMSKVIGQLMLLCLTVVYDRYWKKLPMRALIHIVQLLYAFSLLFDYILVKQINLAFGISNTAFVLCFSSVAEILAQFKILPFSVLLANMCPGGCEGSITSFLASTLCLSSVVSGFTGVGMANMIGITSKNYSNLPAGILIQSLAALVPLWFIHYVPMLEPGFEREGKRAMSKKSRRNRRVGRVIGQESFAYRRERET</sequence>
<dbReference type="EMBL" id="AC002332">
    <property type="protein sequence ID" value="AAB80646.1"/>
    <property type="status" value="ALT_INIT"/>
    <property type="molecule type" value="Genomic_DNA"/>
</dbReference>
<dbReference type="EMBL" id="CP002685">
    <property type="protein sequence ID" value="AEC08809.2"/>
    <property type="molecule type" value="Genomic_DNA"/>
</dbReference>
<dbReference type="PIR" id="E84743">
    <property type="entry name" value="E84743"/>
</dbReference>
<dbReference type="RefSeq" id="NP_001318340.1">
    <property type="nucleotide sequence ID" value="NM_001336442.1"/>
</dbReference>
<dbReference type="SMR" id="O22780"/>
<dbReference type="PaxDb" id="3702-AT2G33280.1"/>
<dbReference type="EnsemblPlants" id="AT2G33280.1">
    <property type="protein sequence ID" value="AT2G33280.1"/>
    <property type="gene ID" value="AT2G33280"/>
</dbReference>
<dbReference type="GeneID" id="817891"/>
<dbReference type="Gramene" id="AT2G33280.1">
    <property type="protein sequence ID" value="AT2G33280.1"/>
    <property type="gene ID" value="AT2G33280"/>
</dbReference>
<dbReference type="KEGG" id="ath:AT2G33280"/>
<dbReference type="Araport" id="AT2G33280"/>
<dbReference type="TAIR" id="AT2G33280"/>
<dbReference type="eggNOG" id="ENOG502QSTI">
    <property type="taxonomic scope" value="Eukaryota"/>
</dbReference>
<dbReference type="HOGENOM" id="CLU_018563_0_0_1"/>
<dbReference type="InParanoid" id="O22780"/>
<dbReference type="OrthoDB" id="1923497at2759"/>
<dbReference type="PRO" id="PR:O22780"/>
<dbReference type="Proteomes" id="UP000006548">
    <property type="component" value="Chromosome 2"/>
</dbReference>
<dbReference type="ExpressionAtlas" id="O22780">
    <property type="expression patterns" value="baseline and differential"/>
</dbReference>
<dbReference type="GO" id="GO:0031969">
    <property type="term" value="C:chloroplast membrane"/>
    <property type="evidence" value="ECO:0007669"/>
    <property type="project" value="UniProtKB-SubCell"/>
</dbReference>
<dbReference type="Gene3D" id="1.20.1250.20">
    <property type="entry name" value="MFS general substrate transporter like domains"/>
    <property type="match status" value="1"/>
</dbReference>
<dbReference type="InterPro" id="IPR039309">
    <property type="entry name" value="BT1"/>
</dbReference>
<dbReference type="InterPro" id="IPR004324">
    <property type="entry name" value="FBT"/>
</dbReference>
<dbReference type="InterPro" id="IPR036259">
    <property type="entry name" value="MFS_trans_sf"/>
</dbReference>
<dbReference type="NCBIfam" id="TIGR00788">
    <property type="entry name" value="fbt"/>
    <property type="match status" value="1"/>
</dbReference>
<dbReference type="PANTHER" id="PTHR31585">
    <property type="entry name" value="FOLATE-BIOPTERIN TRANSPORTER 1, CHLOROPLASTIC"/>
    <property type="match status" value="1"/>
</dbReference>
<dbReference type="PANTHER" id="PTHR31585:SF12">
    <property type="entry name" value="FOLATE-BIOPTERIN TRANSPORTER 9, CHLOROPLASTIC-RELATED"/>
    <property type="match status" value="1"/>
</dbReference>
<dbReference type="Pfam" id="PF03092">
    <property type="entry name" value="BT1"/>
    <property type="match status" value="1"/>
</dbReference>
<dbReference type="SUPFAM" id="SSF103473">
    <property type="entry name" value="MFS general substrate transporter"/>
    <property type="match status" value="1"/>
</dbReference>
<organism>
    <name type="scientific">Arabidopsis thaliana</name>
    <name type="common">Mouse-ear cress</name>
    <dbReference type="NCBI Taxonomy" id="3702"/>
    <lineage>
        <taxon>Eukaryota</taxon>
        <taxon>Viridiplantae</taxon>
        <taxon>Streptophyta</taxon>
        <taxon>Embryophyta</taxon>
        <taxon>Tracheophyta</taxon>
        <taxon>Spermatophyta</taxon>
        <taxon>Magnoliopsida</taxon>
        <taxon>eudicotyledons</taxon>
        <taxon>Gunneridae</taxon>
        <taxon>Pentapetalae</taxon>
        <taxon>rosids</taxon>
        <taxon>malvids</taxon>
        <taxon>Brassicales</taxon>
        <taxon>Brassicaceae</taxon>
        <taxon>Camelineae</taxon>
        <taxon>Arabidopsis</taxon>
    </lineage>
</organism>
<reference key="1">
    <citation type="journal article" date="1999" name="Nature">
        <title>Sequence and analysis of chromosome 2 of the plant Arabidopsis thaliana.</title>
        <authorList>
            <person name="Lin X."/>
            <person name="Kaul S."/>
            <person name="Rounsley S.D."/>
            <person name="Shea T.P."/>
            <person name="Benito M.-I."/>
            <person name="Town C.D."/>
            <person name="Fujii C.Y."/>
            <person name="Mason T.M."/>
            <person name="Bowman C.L."/>
            <person name="Barnstead M.E."/>
            <person name="Feldblyum T.V."/>
            <person name="Buell C.R."/>
            <person name="Ketchum K.A."/>
            <person name="Lee J.J."/>
            <person name="Ronning C.M."/>
            <person name="Koo H.L."/>
            <person name="Moffat K.S."/>
            <person name="Cronin L.A."/>
            <person name="Shen M."/>
            <person name="Pai G."/>
            <person name="Van Aken S."/>
            <person name="Umayam L."/>
            <person name="Tallon L.J."/>
            <person name="Gill J.E."/>
            <person name="Adams M.D."/>
            <person name="Carrera A.J."/>
            <person name="Creasy T.H."/>
            <person name="Goodman H.M."/>
            <person name="Somerville C.R."/>
            <person name="Copenhaver G.P."/>
            <person name="Preuss D."/>
            <person name="Nierman W.C."/>
            <person name="White O."/>
            <person name="Eisen J.A."/>
            <person name="Salzberg S.L."/>
            <person name="Fraser C.M."/>
            <person name="Venter J.C."/>
        </authorList>
    </citation>
    <scope>NUCLEOTIDE SEQUENCE [LARGE SCALE GENOMIC DNA]</scope>
    <source>
        <strain>cv. Columbia</strain>
    </source>
</reference>
<reference key="2">
    <citation type="journal article" date="2017" name="Plant J.">
        <title>Araport11: a complete reannotation of the Arabidopsis thaliana reference genome.</title>
        <authorList>
            <person name="Cheng C.Y."/>
            <person name="Krishnakumar V."/>
            <person name="Chan A.P."/>
            <person name="Thibaud-Nissen F."/>
            <person name="Schobel S."/>
            <person name="Town C.D."/>
        </authorList>
    </citation>
    <scope>GENOME REANNOTATION</scope>
    <source>
        <strain>cv. Columbia</strain>
    </source>
</reference>
<reference key="3">
    <citation type="journal article" date="2005" name="J. Biol. Chem.">
        <title>Higher plant plastids and cyanobacteria have folate carriers related to those of trypanosomatids.</title>
        <authorList>
            <person name="Klaus S.M."/>
            <person name="Kunji E.R."/>
            <person name="Bozzo G.G."/>
            <person name="Noiriel A."/>
            <person name="de la Garza R.D."/>
            <person name="Basset G.J."/>
            <person name="Ravanel S."/>
            <person name="Rebeille F."/>
            <person name="Gregory J.F. III"/>
            <person name="Hanson A.D."/>
        </authorList>
    </citation>
    <scope>GENE FAMILY</scope>
</reference>
<name>FBT9_ARATH</name>
<feature type="transit peptide" description="Chloroplast" evidence="2">
    <location>
        <begin position="1"/>
        <end position="57"/>
    </location>
</feature>
<feature type="chain" id="PRO_0000420121" description="Probable folate-biopterin transporter 9, chloroplastic">
    <location>
        <begin position="58"/>
        <end position="538"/>
    </location>
</feature>
<feature type="transmembrane region" description="Helical" evidence="2">
    <location>
        <begin position="85"/>
        <end position="105"/>
    </location>
</feature>
<feature type="transmembrane region" description="Helical" evidence="2">
    <location>
        <begin position="129"/>
        <end position="149"/>
    </location>
</feature>
<feature type="transmembrane region" description="Helical" evidence="2">
    <location>
        <begin position="152"/>
        <end position="172"/>
    </location>
</feature>
<feature type="transmembrane region" description="Helical" evidence="2">
    <location>
        <begin position="178"/>
        <end position="198"/>
    </location>
</feature>
<feature type="transmembrane region" description="Helical" evidence="2">
    <location>
        <begin position="220"/>
        <end position="240"/>
    </location>
</feature>
<feature type="transmembrane region" description="Helical" evidence="2">
    <location>
        <begin position="246"/>
        <end position="266"/>
    </location>
</feature>
<feature type="transmembrane region" description="Helical" evidence="2">
    <location>
        <begin position="309"/>
        <end position="329"/>
    </location>
</feature>
<feature type="transmembrane region" description="Helical" evidence="2">
    <location>
        <begin position="339"/>
        <end position="359"/>
    </location>
</feature>
<feature type="transmembrane region" description="Helical" evidence="2">
    <location>
        <begin position="370"/>
        <end position="390"/>
    </location>
</feature>
<feature type="transmembrane region" description="Helical" evidence="2">
    <location>
        <begin position="395"/>
        <end position="415"/>
    </location>
</feature>
<feature type="transmembrane region" description="Helical" evidence="2">
    <location>
        <begin position="447"/>
        <end position="467"/>
    </location>
</feature>
<feature type="transmembrane region" description="Helical" evidence="2">
    <location>
        <begin position="479"/>
        <end position="499"/>
    </location>
</feature>
<proteinExistence type="inferred from homology"/>
<gene>
    <name type="ordered locus">At2g33280</name>
    <name type="ORF">F4P9.5</name>
</gene>
<keyword id="KW-0150">Chloroplast</keyword>
<keyword id="KW-0472">Membrane</keyword>
<keyword id="KW-0934">Plastid</keyword>
<keyword id="KW-1185">Reference proteome</keyword>
<keyword id="KW-0809">Transit peptide</keyword>
<keyword id="KW-0812">Transmembrane</keyword>
<keyword id="KW-1133">Transmembrane helix</keyword>
<keyword id="KW-0813">Transport</keyword>
<accession>O22780</accession>